<sequence length="382" mass="42885">MIKPNIPAPVRPNLPLSSPDSVLPQAMKDPFNIFDDDEPSEDTSSSEQSSRPPPREMMISSSCALREQTNSSFLNRFFPEDDESSENGAALAEINQLLRDGPEAPPREPTPKEARRPEKMQKIFFQTYGNDFKVEAHGDRLLAQNQRVVRLFERGRILGLGVKMNIPMGYCAVTNCFHPPGCVCVMDMAGYGPSDIRAQIVNISSGPLELPPNMLQIHIHMLPMLLPEPWQTINLMAPHQGDTYFDLRLRRPLSLPPRASKNLKFEAGHLCEEDARRCLVIPCRHLATKRVLLDPTVWRPNSLAVLRVLNASDEHVDLEAGMAMAKIIFTTPGITPFKPSLTSVMMSFDVPRSDLKLVKGGRRDYYRAEERMRSGRDSSNEG</sequence>
<accession>Q69151</accession>
<feature type="chain" id="PRO_0000182966" description="Deoxyuridine 5'-triphosphate nucleotidohydrolase">
    <location>
        <begin position="1"/>
        <end position="382"/>
    </location>
</feature>
<feature type="region of interest" description="Disordered" evidence="2">
    <location>
        <begin position="1"/>
        <end position="60"/>
    </location>
</feature>
<feature type="region of interest" description="Disordered" evidence="2">
    <location>
        <begin position="97"/>
        <end position="118"/>
    </location>
</feature>
<feature type="compositionally biased region" description="Pro residues" evidence="2">
    <location>
        <begin position="1"/>
        <end position="12"/>
    </location>
</feature>
<feature type="compositionally biased region" description="Basic and acidic residues" evidence="2">
    <location>
        <begin position="100"/>
        <end position="118"/>
    </location>
</feature>
<reference key="1">
    <citation type="journal article" date="1995" name="Virus Genes">
        <title>Characterization of a conserved gene block in the murine cytomegalovirus genome.</title>
        <authorList>
            <person name="Messerle M."/>
            <person name="Rapp M."/>
            <person name="Lucin P."/>
            <person name="Koszinowski U.H."/>
        </authorList>
    </citation>
    <scope>NUCLEOTIDE SEQUENCE [GENOMIC DNA]</scope>
</reference>
<reference key="2">
    <citation type="journal article" date="1996" name="J. Virol.">
        <title>Analysis of the complete DNA sequence of murine cytomegalovirus.</title>
        <authorList>
            <person name="Rawlinson W.D."/>
            <person name="Farrell H.E."/>
            <person name="Barrell B.G."/>
        </authorList>
    </citation>
    <scope>NUCLEOTIDE SEQUENCE [LARGE SCALE GENOMIC DNA]</scope>
</reference>
<dbReference type="EC" id="3.6.1.23" evidence="1"/>
<dbReference type="EMBL" id="L07319">
    <property type="protein sequence ID" value="AAA96663.1"/>
    <property type="molecule type" value="Genomic_DNA"/>
</dbReference>
<dbReference type="EMBL" id="U68299">
    <property type="status" value="NOT_ANNOTATED_CDS"/>
    <property type="molecule type" value="Genomic_DNA"/>
</dbReference>
<dbReference type="SMR" id="Q69151"/>
<dbReference type="UniPathway" id="UPA00610">
    <property type="reaction ID" value="UER00666"/>
</dbReference>
<dbReference type="Proteomes" id="UP000008774">
    <property type="component" value="Segment"/>
</dbReference>
<dbReference type="GO" id="GO:0004170">
    <property type="term" value="F:dUTP diphosphatase activity"/>
    <property type="evidence" value="ECO:0007669"/>
    <property type="project" value="UniProtKB-EC"/>
</dbReference>
<dbReference type="GO" id="GO:0046872">
    <property type="term" value="F:metal ion binding"/>
    <property type="evidence" value="ECO:0007669"/>
    <property type="project" value="UniProtKB-KW"/>
</dbReference>
<dbReference type="GO" id="GO:0006226">
    <property type="term" value="P:dUMP biosynthetic process"/>
    <property type="evidence" value="ECO:0007669"/>
    <property type="project" value="UniProtKB-UniPathway"/>
</dbReference>
<dbReference type="GO" id="GO:0046080">
    <property type="term" value="P:dUTP metabolic process"/>
    <property type="evidence" value="ECO:0007669"/>
    <property type="project" value="InterPro"/>
</dbReference>
<dbReference type="Gene3D" id="2.70.40.10">
    <property type="match status" value="2"/>
</dbReference>
<dbReference type="HAMAP" id="MF_04031">
    <property type="entry name" value="HSV_DUT"/>
    <property type="match status" value="1"/>
</dbReference>
<dbReference type="InterPro" id="IPR029054">
    <property type="entry name" value="dUTPase-like"/>
</dbReference>
<dbReference type="InterPro" id="IPR036157">
    <property type="entry name" value="dUTPase-like_sf"/>
</dbReference>
<dbReference type="InterPro" id="IPR034745">
    <property type="entry name" value="HSV_DUT"/>
</dbReference>
<dbReference type="Pfam" id="PF00692">
    <property type="entry name" value="dUTPase"/>
    <property type="match status" value="1"/>
</dbReference>
<dbReference type="SUPFAM" id="SSF51283">
    <property type="entry name" value="dUTPase-like"/>
    <property type="match status" value="1"/>
</dbReference>
<gene>
    <name evidence="1" type="primary">DUT</name>
    <name type="ordered locus">UL72</name>
</gene>
<keyword id="KW-0378">Hydrolase</keyword>
<keyword id="KW-0460">Magnesium</keyword>
<keyword id="KW-0479">Metal-binding</keyword>
<keyword id="KW-0546">Nucleotide metabolism</keyword>
<keyword id="KW-1185">Reference proteome</keyword>
<protein>
    <recommendedName>
        <fullName evidence="1">Deoxyuridine 5'-triphosphate nucleotidohydrolase</fullName>
        <shortName evidence="1">dUTPase</shortName>
        <ecNumber evidence="1">3.6.1.23</ecNumber>
    </recommendedName>
    <alternativeName>
        <fullName evidence="1">dUTP pyrophosphatase</fullName>
    </alternativeName>
</protein>
<proteinExistence type="inferred from homology"/>
<evidence type="ECO:0000255" key="1">
    <source>
        <dbReference type="HAMAP-Rule" id="MF_04031"/>
    </source>
</evidence>
<evidence type="ECO:0000256" key="2">
    <source>
        <dbReference type="SAM" id="MobiDB-lite"/>
    </source>
</evidence>
<organism>
    <name type="scientific">Murid herpesvirus 1 (strain Smith)</name>
    <name type="common">MuHV-1</name>
    <name type="synonym">Mouse cytomegalovirus</name>
    <dbReference type="NCBI Taxonomy" id="10367"/>
    <lineage>
        <taxon>Viruses</taxon>
        <taxon>Duplodnaviria</taxon>
        <taxon>Heunggongvirae</taxon>
        <taxon>Peploviricota</taxon>
        <taxon>Herviviricetes</taxon>
        <taxon>Herpesvirales</taxon>
        <taxon>Orthoherpesviridae</taxon>
        <taxon>Betaherpesvirinae</taxon>
        <taxon>Muromegalovirus</taxon>
        <taxon>Muromegalovirus muridbeta1</taxon>
        <taxon>Murid herpesvirus 1</taxon>
    </lineage>
</organism>
<name>DUT_MUHVS</name>
<organismHost>
    <name type="scientific">Mus musculus</name>
    <name type="common">Mouse</name>
    <dbReference type="NCBI Taxonomy" id="10090"/>
</organismHost>
<comment type="function">
    <text evidence="1">Involved in nucleotide metabolism: produces dUMP, the immediate precursor of thymidine nucleotides and decreases the intracellular concentration of dUTP to avoid uracil incorporation into viral DNA.</text>
</comment>
<comment type="catalytic activity">
    <reaction evidence="1">
        <text>dUTP + H2O = dUMP + diphosphate + H(+)</text>
        <dbReference type="Rhea" id="RHEA:10248"/>
        <dbReference type="ChEBI" id="CHEBI:15377"/>
        <dbReference type="ChEBI" id="CHEBI:15378"/>
        <dbReference type="ChEBI" id="CHEBI:33019"/>
        <dbReference type="ChEBI" id="CHEBI:61555"/>
        <dbReference type="ChEBI" id="CHEBI:246422"/>
        <dbReference type="EC" id="3.6.1.23"/>
    </reaction>
</comment>
<comment type="cofactor">
    <cofactor evidence="1">
        <name>Mg(2+)</name>
        <dbReference type="ChEBI" id="CHEBI:18420"/>
    </cofactor>
</comment>
<comment type="pathway">
    <text>Pyrimidine metabolism; dUMP biosynthesis; dUMP from dCTP (dUTP route): step 2/2.</text>
</comment>
<comment type="similarity">
    <text evidence="1">Belongs to the dUTPase family.</text>
</comment>